<feature type="chain" id="PRO_0000121577" description="Low specificity L-threonine aldolase">
    <location>
        <begin position="1"/>
        <end position="346"/>
    </location>
</feature>
<feature type="modified residue" description="N6-(pyridoxal phosphate)lysine" evidence="1">
    <location>
        <position position="207"/>
    </location>
</feature>
<reference key="1">
    <citation type="journal article" date="2000" name="Nature">
        <title>Complete genome sequence of Pseudomonas aeruginosa PAO1, an opportunistic pathogen.</title>
        <authorList>
            <person name="Stover C.K."/>
            <person name="Pham X.-Q.T."/>
            <person name="Erwin A.L."/>
            <person name="Mizoguchi S.D."/>
            <person name="Warrener P."/>
            <person name="Hickey M.J."/>
            <person name="Brinkman F.S.L."/>
            <person name="Hufnagle W.O."/>
            <person name="Kowalik D.J."/>
            <person name="Lagrou M."/>
            <person name="Garber R.L."/>
            <person name="Goltry L."/>
            <person name="Tolentino E."/>
            <person name="Westbrock-Wadman S."/>
            <person name="Yuan Y."/>
            <person name="Brody L.L."/>
            <person name="Coulter S.N."/>
            <person name="Folger K.R."/>
            <person name="Kas A."/>
            <person name="Larbig K."/>
            <person name="Lim R.M."/>
            <person name="Smith K.A."/>
            <person name="Spencer D.H."/>
            <person name="Wong G.K.-S."/>
            <person name="Wu Z."/>
            <person name="Paulsen I.T."/>
            <person name="Reizer J."/>
            <person name="Saier M.H. Jr."/>
            <person name="Hancock R.E.W."/>
            <person name="Lory S."/>
            <person name="Olson M.V."/>
        </authorList>
    </citation>
    <scope>NUCLEOTIDE SEQUENCE [LARGE SCALE GENOMIC DNA]</scope>
    <source>
        <strain>ATCC 15692 / DSM 22644 / CIP 104116 / JCM 14847 / LMG 12228 / 1C / PRS 101 / PAO1</strain>
    </source>
</reference>
<dbReference type="EC" id="4.1.2.48"/>
<dbReference type="EMBL" id="AE004091">
    <property type="protein sequence ID" value="AAG08798.1"/>
    <property type="molecule type" value="Genomic_DNA"/>
</dbReference>
<dbReference type="PIR" id="A82971">
    <property type="entry name" value="A82971"/>
</dbReference>
<dbReference type="RefSeq" id="WP_003105702.1">
    <property type="nucleotide sequence ID" value="NZ_QZGE01000031.1"/>
</dbReference>
<dbReference type="SMR" id="Q9HTF1"/>
<dbReference type="STRING" id="208964.PA5413"/>
<dbReference type="PaxDb" id="208964-PA5413"/>
<dbReference type="KEGG" id="pae:PA5413"/>
<dbReference type="PATRIC" id="fig|208964.12.peg.5673"/>
<dbReference type="PseudoCAP" id="PA5413"/>
<dbReference type="HOGENOM" id="CLU_049619_0_0_6"/>
<dbReference type="InParanoid" id="Q9HTF1"/>
<dbReference type="OrthoDB" id="9774495at2"/>
<dbReference type="PhylomeDB" id="Q9HTF1"/>
<dbReference type="BioCyc" id="PAER208964:G1FZ6-5540-MONOMER"/>
<dbReference type="Proteomes" id="UP000002438">
    <property type="component" value="Chromosome"/>
</dbReference>
<dbReference type="GO" id="GO:0008732">
    <property type="term" value="F:L-allo-threonine aldolase activity"/>
    <property type="evidence" value="ECO:0007669"/>
    <property type="project" value="RHEA"/>
</dbReference>
<dbReference type="GO" id="GO:0006567">
    <property type="term" value="P:threonine catabolic process"/>
    <property type="evidence" value="ECO:0007669"/>
    <property type="project" value="InterPro"/>
</dbReference>
<dbReference type="CDD" id="cd06502">
    <property type="entry name" value="TA_like"/>
    <property type="match status" value="1"/>
</dbReference>
<dbReference type="FunFam" id="3.40.640.10:FF:000087">
    <property type="entry name" value="L-threonine aldolase"/>
    <property type="match status" value="1"/>
</dbReference>
<dbReference type="Gene3D" id="3.90.1150.10">
    <property type="entry name" value="Aspartate Aminotransferase, domain 1"/>
    <property type="match status" value="1"/>
</dbReference>
<dbReference type="Gene3D" id="3.40.640.10">
    <property type="entry name" value="Type I PLP-dependent aspartate aminotransferase-like (Major domain)"/>
    <property type="match status" value="1"/>
</dbReference>
<dbReference type="InterPro" id="IPR001597">
    <property type="entry name" value="ArAA_b-elim_lyase/Thr_aldolase"/>
</dbReference>
<dbReference type="InterPro" id="IPR026273">
    <property type="entry name" value="Low_specificity_L-TA_bact"/>
</dbReference>
<dbReference type="InterPro" id="IPR015424">
    <property type="entry name" value="PyrdxlP-dep_Trfase"/>
</dbReference>
<dbReference type="InterPro" id="IPR015421">
    <property type="entry name" value="PyrdxlP-dep_Trfase_major"/>
</dbReference>
<dbReference type="InterPro" id="IPR015422">
    <property type="entry name" value="PyrdxlP-dep_Trfase_small"/>
</dbReference>
<dbReference type="PANTHER" id="PTHR48097">
    <property type="entry name" value="L-THREONINE ALDOLASE-RELATED"/>
    <property type="match status" value="1"/>
</dbReference>
<dbReference type="PANTHER" id="PTHR48097:SF5">
    <property type="entry name" value="LOW SPECIFICITY L-THREONINE ALDOLASE"/>
    <property type="match status" value="1"/>
</dbReference>
<dbReference type="Pfam" id="PF01212">
    <property type="entry name" value="Beta_elim_lyase"/>
    <property type="match status" value="1"/>
</dbReference>
<dbReference type="PIRSF" id="PIRSF038940">
    <property type="entry name" value="Low_specificity_LTA"/>
    <property type="match status" value="1"/>
</dbReference>
<dbReference type="SUPFAM" id="SSF53383">
    <property type="entry name" value="PLP-dependent transferases"/>
    <property type="match status" value="1"/>
</dbReference>
<organism>
    <name type="scientific">Pseudomonas aeruginosa (strain ATCC 15692 / DSM 22644 / CIP 104116 / JCM 14847 / LMG 12228 / 1C / PRS 101 / PAO1)</name>
    <dbReference type="NCBI Taxonomy" id="208964"/>
    <lineage>
        <taxon>Bacteria</taxon>
        <taxon>Pseudomonadati</taxon>
        <taxon>Pseudomonadota</taxon>
        <taxon>Gammaproteobacteria</taxon>
        <taxon>Pseudomonadales</taxon>
        <taxon>Pseudomonadaceae</taxon>
        <taxon>Pseudomonas</taxon>
    </lineage>
</organism>
<gene>
    <name type="primary">ltaE</name>
    <name type="ordered locus">PA5413</name>
</gene>
<protein>
    <recommendedName>
        <fullName>Low specificity L-threonine aldolase</fullName>
        <shortName>Low specificity L-TA</shortName>
        <ecNumber>4.1.2.48</ecNumber>
    </recommendedName>
</protein>
<accession>Q9HTF1</accession>
<keyword id="KW-0456">Lyase</keyword>
<keyword id="KW-0663">Pyridoxal phosphate</keyword>
<keyword id="KW-1185">Reference proteome</keyword>
<name>LTAE_PSEAE</name>
<proteinExistence type="inferred from homology"/>
<sequence>MTDHTQQFASDNYSGICPEAWAAMAEANRGHERAYGDDQWTARASDYFRQLFETDCEVFFAFNGTAANSLALAALCQSYHSVICSETAHVETDECGAPEFFSNGSKLLLAQTEVGKLTPASIRDIALKRQDIHYPKPRVVTLTQATEVGTVYRPDELKAISATCKELGLHLHMDGARFSNACAFLGCSPAELSWKAGVDVLCFGGTKNGMAVGEAILFFNRDLAEDFDYRCKQAGQLASKMRFLAAPWVGVLQDDAWLRYADHANRCARLLAELVADVPGVSLMFPVEANGVFLQLSEPAIEALRARGWRFYTFIGEGGARFMCSWDTDIERVRELARDIRLVMGA</sequence>
<evidence type="ECO:0000250" key="1"/>
<evidence type="ECO:0000305" key="2"/>
<comment type="function">
    <text evidence="1">Catalyzes the cleavage of L-allo-threonine and L-threonine to glycine and acetaldehyde.</text>
</comment>
<comment type="catalytic activity">
    <reaction>
        <text>L-threonine = acetaldehyde + glycine</text>
        <dbReference type="Rhea" id="RHEA:19625"/>
        <dbReference type="ChEBI" id="CHEBI:15343"/>
        <dbReference type="ChEBI" id="CHEBI:57305"/>
        <dbReference type="ChEBI" id="CHEBI:57926"/>
        <dbReference type="EC" id="4.1.2.48"/>
    </reaction>
</comment>
<comment type="catalytic activity">
    <reaction>
        <text>L-allo-threonine = acetaldehyde + glycine</text>
        <dbReference type="Rhea" id="RHEA:26209"/>
        <dbReference type="ChEBI" id="CHEBI:15343"/>
        <dbReference type="ChEBI" id="CHEBI:57305"/>
        <dbReference type="ChEBI" id="CHEBI:58585"/>
        <dbReference type="EC" id="4.1.2.48"/>
    </reaction>
</comment>
<comment type="cofactor">
    <cofactor evidence="1">
        <name>pyridoxal 5'-phosphate</name>
        <dbReference type="ChEBI" id="CHEBI:597326"/>
    </cofactor>
</comment>
<comment type="subunit">
    <text evidence="1">Homotetramer.</text>
</comment>
<comment type="similarity">
    <text evidence="2">Belongs to the threonine aldolase family.</text>
</comment>